<reference key="1">
    <citation type="journal article" date="2012" name="MBio">
        <title>Comparative genome analysis of Trichophyton rubrum and related dermatophytes reveals candidate genes involved in infection.</title>
        <authorList>
            <person name="Martinez D.A."/>
            <person name="Oliver B.G."/>
            <person name="Graeser Y."/>
            <person name="Goldberg J.M."/>
            <person name="Li W."/>
            <person name="Martinez-Rossi N.M."/>
            <person name="Monod M."/>
            <person name="Shelest E."/>
            <person name="Barton R.C."/>
            <person name="Birch E."/>
            <person name="Brakhage A.A."/>
            <person name="Chen Z."/>
            <person name="Gurr S.J."/>
            <person name="Heiman D."/>
            <person name="Heitman J."/>
            <person name="Kosti I."/>
            <person name="Rossi A."/>
            <person name="Saif S."/>
            <person name="Samalova M."/>
            <person name="Saunders C.W."/>
            <person name="Shea T."/>
            <person name="Summerbell R.C."/>
            <person name="Xu J."/>
            <person name="Young S."/>
            <person name="Zeng Q."/>
            <person name="Birren B.W."/>
            <person name="Cuomo C.A."/>
            <person name="White T.C."/>
        </authorList>
    </citation>
    <scope>NUCLEOTIDE SEQUENCE [LARGE SCALE GENOMIC DNA]</scope>
    <source>
        <strain>ATCC MYA-4605 / CBS 113480</strain>
    </source>
</reference>
<protein>
    <recommendedName>
        <fullName>Extracellular metalloprotease MCYG_03238</fullName>
        <ecNumber>3.4.24.-</ecNumber>
    </recommendedName>
</protein>
<evidence type="ECO:0000250" key="1"/>
<evidence type="ECO:0000255" key="2"/>
<evidence type="ECO:0000255" key="3">
    <source>
        <dbReference type="PROSITE-ProRule" id="PRU10095"/>
    </source>
</evidence>
<evidence type="ECO:0000305" key="4"/>
<feature type="signal peptide" evidence="2">
    <location>
        <begin position="1"/>
        <end position="19"/>
    </location>
</feature>
<feature type="chain" id="PRO_0000407216" description="Extracellular metalloprotease MCYG_03238">
    <location>
        <begin position="20"/>
        <end position="278"/>
    </location>
</feature>
<feature type="active site" evidence="3">
    <location>
        <position position="171"/>
    </location>
</feature>
<feature type="binding site" evidence="3">
    <location>
        <position position="170"/>
    </location>
    <ligand>
        <name>Zn(2+)</name>
        <dbReference type="ChEBI" id="CHEBI:29105"/>
        <note>catalytic</note>
    </ligand>
</feature>
<feature type="binding site" evidence="3">
    <location>
        <position position="174"/>
    </location>
    <ligand>
        <name>Zn(2+)</name>
        <dbReference type="ChEBI" id="CHEBI:29105"/>
        <note>catalytic</note>
    </ligand>
</feature>
<feature type="glycosylation site" description="N-linked (GlcNAc...) asparagine" evidence="2">
    <location>
        <position position="52"/>
    </location>
</feature>
<feature type="disulfide bond" evidence="1">
    <location>
        <begin position="209"/>
        <end position="255"/>
    </location>
</feature>
<proteinExistence type="inferred from homology"/>
<gene>
    <name type="ORF">MCYG_03238</name>
</gene>
<keyword id="KW-1015">Disulfide bond</keyword>
<keyword id="KW-0325">Glycoprotein</keyword>
<keyword id="KW-0378">Hydrolase</keyword>
<keyword id="KW-0479">Metal-binding</keyword>
<keyword id="KW-0482">Metalloprotease</keyword>
<keyword id="KW-0645">Protease</keyword>
<keyword id="KW-1185">Reference proteome</keyword>
<keyword id="KW-0964">Secreted</keyword>
<keyword id="KW-0732">Signal</keyword>
<keyword id="KW-0843">Virulence</keyword>
<keyword id="KW-0862">Zinc</keyword>
<sequence>MRFSIVLSSIAALSSVAAAERVCGAIPHRTFAKESKAAIEAATAAGLTTKANITVETYFHVITAGSKGEINNYGPAGIGFKLMDVSRTDNAKWASGGDETGMKKSLRKGGYSALNVYFAPNLEGGLLGFCYFPKANPSANDKLVDGCVILSGSVPGGEAAPYNEGKTTTHEVGHYMGLYHVFNEEQGNCQKDGDMVADTPVQGTKTSGCPQGKDSCPGQGVDSIHNYMDYSDEYVLLSPVYDSWHQTNHRHFSPCMNQFTPGQISRMQMMWQQFRAGK</sequence>
<accession>C5FL47</accession>
<name>MEP7_ARTOC</name>
<organism>
    <name type="scientific">Arthroderma otae (strain ATCC MYA-4605 / CBS 113480)</name>
    <name type="common">Microsporum canis</name>
    <dbReference type="NCBI Taxonomy" id="554155"/>
    <lineage>
        <taxon>Eukaryota</taxon>
        <taxon>Fungi</taxon>
        <taxon>Dikarya</taxon>
        <taxon>Ascomycota</taxon>
        <taxon>Pezizomycotina</taxon>
        <taxon>Eurotiomycetes</taxon>
        <taxon>Eurotiomycetidae</taxon>
        <taxon>Onygenales</taxon>
        <taxon>Arthrodermataceae</taxon>
        <taxon>Microsporum</taxon>
    </lineage>
</organism>
<dbReference type="EC" id="3.4.24.-"/>
<dbReference type="EMBL" id="DS995703">
    <property type="protein sequence ID" value="EEQ30419.1"/>
    <property type="molecule type" value="Genomic_DNA"/>
</dbReference>
<dbReference type="RefSeq" id="XP_002847732.1">
    <property type="nucleotide sequence ID" value="XM_002847686.1"/>
</dbReference>
<dbReference type="SMR" id="C5FL47"/>
<dbReference type="STRING" id="554155.C5FL47"/>
<dbReference type="GeneID" id="9230494"/>
<dbReference type="VEuPathDB" id="FungiDB:MCYG_03238"/>
<dbReference type="eggNOG" id="ENOG502S6EM">
    <property type="taxonomic scope" value="Eukaryota"/>
</dbReference>
<dbReference type="HOGENOM" id="CLU_048726_0_0_1"/>
<dbReference type="OMA" id="GYCYFPD"/>
<dbReference type="OrthoDB" id="536211at2759"/>
<dbReference type="Proteomes" id="UP000002035">
    <property type="component" value="Unassembled WGS sequence"/>
</dbReference>
<dbReference type="GO" id="GO:0005576">
    <property type="term" value="C:extracellular region"/>
    <property type="evidence" value="ECO:0007669"/>
    <property type="project" value="UniProtKB-SubCell"/>
</dbReference>
<dbReference type="GO" id="GO:0046872">
    <property type="term" value="F:metal ion binding"/>
    <property type="evidence" value="ECO:0007669"/>
    <property type="project" value="UniProtKB-KW"/>
</dbReference>
<dbReference type="GO" id="GO:0008237">
    <property type="term" value="F:metallopeptidase activity"/>
    <property type="evidence" value="ECO:0007669"/>
    <property type="project" value="UniProtKB-KW"/>
</dbReference>
<dbReference type="GO" id="GO:0006508">
    <property type="term" value="P:proteolysis"/>
    <property type="evidence" value="ECO:0007669"/>
    <property type="project" value="UniProtKB-KW"/>
</dbReference>
<dbReference type="CDD" id="cd04275">
    <property type="entry name" value="ZnMc_pappalysin_like"/>
    <property type="match status" value="1"/>
</dbReference>
<dbReference type="Gene3D" id="3.40.390.10">
    <property type="entry name" value="Collagenase (Catalytic Domain)"/>
    <property type="match status" value="1"/>
</dbReference>
<dbReference type="InterPro" id="IPR024079">
    <property type="entry name" value="MetalloPept_cat_dom_sf"/>
</dbReference>
<dbReference type="InterPro" id="IPR008754">
    <property type="entry name" value="Peptidase_M43"/>
</dbReference>
<dbReference type="PANTHER" id="PTHR47466">
    <property type="match status" value="1"/>
</dbReference>
<dbReference type="PANTHER" id="PTHR47466:SF1">
    <property type="entry name" value="METALLOPROTEASE MEP1 (AFU_ORTHOLOGUE AFUA_1G07730)-RELATED"/>
    <property type="match status" value="1"/>
</dbReference>
<dbReference type="Pfam" id="PF05572">
    <property type="entry name" value="Peptidase_M43"/>
    <property type="match status" value="1"/>
</dbReference>
<dbReference type="SUPFAM" id="SSF55486">
    <property type="entry name" value="Metalloproteases ('zincins'), catalytic domain"/>
    <property type="match status" value="1"/>
</dbReference>
<dbReference type="PROSITE" id="PS00142">
    <property type="entry name" value="ZINC_PROTEASE"/>
    <property type="match status" value="1"/>
</dbReference>
<comment type="function">
    <text evidence="1">Secreted metalloproteinase that allows assimilation of proteinaceous substrates. Plays a pivotal role as a pathogenicity determinant during infections and contributes to the ability of the pathogen to persist within the mammalian host (By similarity).</text>
</comment>
<comment type="subcellular location">
    <subcellularLocation>
        <location evidence="1">Secreted</location>
    </subcellularLocation>
</comment>
<comment type="similarity">
    <text evidence="4">Belongs to the peptidase M43B family.</text>
</comment>